<name>IMG1_SCHPO</name>
<feature type="transit peptide" description="Mitochondrion" evidence="2">
    <location>
        <begin position="1"/>
        <end position="21"/>
    </location>
</feature>
<feature type="chain" id="PRO_0000315958" description="Large ribosomal subunit protein bL19m">
    <location>
        <begin position="22"/>
        <end position="182"/>
    </location>
</feature>
<proteinExistence type="inferred from homology"/>
<accession>Q9UT87</accession>
<reference key="1">
    <citation type="journal article" date="2002" name="Nature">
        <title>The genome sequence of Schizosaccharomyces pombe.</title>
        <authorList>
            <person name="Wood V."/>
            <person name="Gwilliam R."/>
            <person name="Rajandream M.A."/>
            <person name="Lyne M.H."/>
            <person name="Lyne R."/>
            <person name="Stewart A."/>
            <person name="Sgouros J.G."/>
            <person name="Peat N."/>
            <person name="Hayles J."/>
            <person name="Baker S.G."/>
            <person name="Basham D."/>
            <person name="Bowman S."/>
            <person name="Brooks K."/>
            <person name="Brown D."/>
            <person name="Brown S."/>
            <person name="Chillingworth T."/>
            <person name="Churcher C.M."/>
            <person name="Collins M."/>
            <person name="Connor R."/>
            <person name="Cronin A."/>
            <person name="Davis P."/>
            <person name="Feltwell T."/>
            <person name="Fraser A."/>
            <person name="Gentles S."/>
            <person name="Goble A."/>
            <person name="Hamlin N."/>
            <person name="Harris D.E."/>
            <person name="Hidalgo J."/>
            <person name="Hodgson G."/>
            <person name="Holroyd S."/>
            <person name="Hornsby T."/>
            <person name="Howarth S."/>
            <person name="Huckle E.J."/>
            <person name="Hunt S."/>
            <person name="Jagels K."/>
            <person name="James K.D."/>
            <person name="Jones L."/>
            <person name="Jones M."/>
            <person name="Leather S."/>
            <person name="McDonald S."/>
            <person name="McLean J."/>
            <person name="Mooney P."/>
            <person name="Moule S."/>
            <person name="Mungall K.L."/>
            <person name="Murphy L.D."/>
            <person name="Niblett D."/>
            <person name="Odell C."/>
            <person name="Oliver K."/>
            <person name="O'Neil S."/>
            <person name="Pearson D."/>
            <person name="Quail M.A."/>
            <person name="Rabbinowitsch E."/>
            <person name="Rutherford K.M."/>
            <person name="Rutter S."/>
            <person name="Saunders D."/>
            <person name="Seeger K."/>
            <person name="Sharp S."/>
            <person name="Skelton J."/>
            <person name="Simmonds M.N."/>
            <person name="Squares R."/>
            <person name="Squares S."/>
            <person name="Stevens K."/>
            <person name="Taylor K."/>
            <person name="Taylor R.G."/>
            <person name="Tivey A."/>
            <person name="Walsh S.V."/>
            <person name="Warren T."/>
            <person name="Whitehead S."/>
            <person name="Woodward J.R."/>
            <person name="Volckaert G."/>
            <person name="Aert R."/>
            <person name="Robben J."/>
            <person name="Grymonprez B."/>
            <person name="Weltjens I."/>
            <person name="Vanstreels E."/>
            <person name="Rieger M."/>
            <person name="Schaefer M."/>
            <person name="Mueller-Auer S."/>
            <person name="Gabel C."/>
            <person name="Fuchs M."/>
            <person name="Duesterhoeft A."/>
            <person name="Fritzc C."/>
            <person name="Holzer E."/>
            <person name="Moestl D."/>
            <person name="Hilbert H."/>
            <person name="Borzym K."/>
            <person name="Langer I."/>
            <person name="Beck A."/>
            <person name="Lehrach H."/>
            <person name="Reinhardt R."/>
            <person name="Pohl T.M."/>
            <person name="Eger P."/>
            <person name="Zimmermann W."/>
            <person name="Wedler H."/>
            <person name="Wambutt R."/>
            <person name="Purnelle B."/>
            <person name="Goffeau A."/>
            <person name="Cadieu E."/>
            <person name="Dreano S."/>
            <person name="Gloux S."/>
            <person name="Lelaure V."/>
            <person name="Mottier S."/>
            <person name="Galibert F."/>
            <person name="Aves S.J."/>
            <person name="Xiang Z."/>
            <person name="Hunt C."/>
            <person name="Moore K."/>
            <person name="Hurst S.M."/>
            <person name="Lucas M."/>
            <person name="Rochet M."/>
            <person name="Gaillardin C."/>
            <person name="Tallada V.A."/>
            <person name="Garzon A."/>
            <person name="Thode G."/>
            <person name="Daga R.R."/>
            <person name="Cruzado L."/>
            <person name="Jimenez J."/>
            <person name="Sanchez M."/>
            <person name="del Rey F."/>
            <person name="Benito J."/>
            <person name="Dominguez A."/>
            <person name="Revuelta J.L."/>
            <person name="Moreno S."/>
            <person name="Armstrong J."/>
            <person name="Forsburg S.L."/>
            <person name="Cerutti L."/>
            <person name="Lowe T."/>
            <person name="McCombie W.R."/>
            <person name="Paulsen I."/>
            <person name="Potashkin J."/>
            <person name="Shpakovski G.V."/>
            <person name="Ussery D."/>
            <person name="Barrell B.G."/>
            <person name="Nurse P."/>
        </authorList>
    </citation>
    <scope>NUCLEOTIDE SEQUENCE [LARGE SCALE GENOMIC DNA]</scope>
    <source>
        <strain>972 / ATCC 24843</strain>
    </source>
</reference>
<reference key="2">
    <citation type="journal article" date="2006" name="Nat. Biotechnol.">
        <title>ORFeome cloning and global analysis of protein localization in the fission yeast Schizosaccharomyces pombe.</title>
        <authorList>
            <person name="Matsuyama A."/>
            <person name="Arai R."/>
            <person name="Yashiroda Y."/>
            <person name="Shirai A."/>
            <person name="Kamata A."/>
            <person name="Sekido S."/>
            <person name="Kobayashi Y."/>
            <person name="Hashimoto A."/>
            <person name="Hamamoto M."/>
            <person name="Hiraoka Y."/>
            <person name="Horinouchi S."/>
            <person name="Yoshida M."/>
        </authorList>
    </citation>
    <scope>SUBCELLULAR LOCATION [LARGE SCALE ANALYSIS]</scope>
</reference>
<protein>
    <recommendedName>
        <fullName evidence="4">Large ribosomal subunit protein bL19m</fullName>
    </recommendedName>
    <alternativeName>
        <fullName>54S ribosomal protein subunit img1, mitochondrial</fullName>
    </alternativeName>
</protein>
<comment type="function">
    <text evidence="1">Component of the mitochondrial ribosome (mitoribosome), a dedicated translation machinery responsible for the synthesis of mitochondrial genome-encoded proteins, including at least some of the essential transmembrane subunits of the mitochondrial respiratory chain. The mitoribosomes are attached to the mitochondrial inner membrane and translation products are cotranslationally integrated into the membrane. bL19m is essential for respiration.</text>
</comment>
<comment type="subunit">
    <text evidence="1">Component of the mitochondrial large ribosomal subunit (mt-LSU). Mature yeast 74S mitochondrial ribosomes consist of a small (37S) and a large (54S) subunit. The 37S small subunit contains a 15S ribosomal RNA (15S mt-rRNA) and at least 32 different proteins. The 54S large subunit contains a 21S rRNA (21S mt-rRNA) and at least 45 different proteins.</text>
</comment>
<comment type="subcellular location">
    <subcellularLocation>
        <location evidence="3">Mitochondrion</location>
    </subcellularLocation>
</comment>
<comment type="similarity">
    <text evidence="4">Belongs to the bacterial ribosomal protein bL19 family.</text>
</comment>
<sequence length="182" mass="21373">MFNAKHFFNLGLGFQWLQKRGIGSLKRPYNFPKPVPGPKHKDVLSLFEKKCRSVLDEQSERFKMFHRSQPNRVRPGAVLLVESYSKYPSKDSVNRFAGYLLRIRHRGPKSSILLRNVVMGVGVEYLLPIYSPQIKRIVVLKENGLSKRPRRAYLSYLRQPRFRLPPVESLVRKYIEQNQHKP</sequence>
<keyword id="KW-0496">Mitochondrion</keyword>
<keyword id="KW-1185">Reference proteome</keyword>
<keyword id="KW-0687">Ribonucleoprotein</keyword>
<keyword id="KW-0689">Ribosomal protein</keyword>
<keyword id="KW-0809">Transit peptide</keyword>
<gene>
    <name type="primary">img1</name>
    <name type="ORF">SPAC343.02</name>
</gene>
<organism>
    <name type="scientific">Schizosaccharomyces pombe (strain 972 / ATCC 24843)</name>
    <name type="common">Fission yeast</name>
    <dbReference type="NCBI Taxonomy" id="284812"/>
    <lineage>
        <taxon>Eukaryota</taxon>
        <taxon>Fungi</taxon>
        <taxon>Dikarya</taxon>
        <taxon>Ascomycota</taxon>
        <taxon>Taphrinomycotina</taxon>
        <taxon>Schizosaccharomycetes</taxon>
        <taxon>Schizosaccharomycetales</taxon>
        <taxon>Schizosaccharomycetaceae</taxon>
        <taxon>Schizosaccharomyces</taxon>
    </lineage>
</organism>
<evidence type="ECO:0000250" key="1">
    <source>
        <dbReference type="UniProtKB" id="P25626"/>
    </source>
</evidence>
<evidence type="ECO:0000255" key="2"/>
<evidence type="ECO:0000269" key="3">
    <source>
    </source>
</evidence>
<evidence type="ECO:0000305" key="4"/>
<dbReference type="EMBL" id="CU329670">
    <property type="protein sequence ID" value="CAB52265.1"/>
    <property type="molecule type" value="Genomic_DNA"/>
</dbReference>
<dbReference type="PIR" id="T38651">
    <property type="entry name" value="T38651"/>
</dbReference>
<dbReference type="RefSeq" id="NP_593422.1">
    <property type="nucleotide sequence ID" value="NM_001018855.2"/>
</dbReference>
<dbReference type="SMR" id="Q9UT87"/>
<dbReference type="BioGRID" id="279557">
    <property type="interactions" value="2"/>
</dbReference>
<dbReference type="ComplexPortal" id="CPX-10323">
    <property type="entry name" value="54S mitochondrial large ribosomal subunit"/>
</dbReference>
<dbReference type="FunCoup" id="Q9UT87">
    <property type="interactions" value="77"/>
</dbReference>
<dbReference type="STRING" id="284812.Q9UT87"/>
<dbReference type="iPTMnet" id="Q9UT87"/>
<dbReference type="PaxDb" id="4896-SPAC343.02.1"/>
<dbReference type="EnsemblFungi" id="SPAC343.02.1">
    <property type="protein sequence ID" value="SPAC343.02.1:pep"/>
    <property type="gene ID" value="SPAC343.02"/>
</dbReference>
<dbReference type="GeneID" id="2543125"/>
<dbReference type="KEGG" id="spo:2543125"/>
<dbReference type="PomBase" id="SPAC343.02">
    <property type="gene designation" value="img1"/>
</dbReference>
<dbReference type="VEuPathDB" id="FungiDB:SPAC343.02"/>
<dbReference type="eggNOG" id="KOG1698">
    <property type="taxonomic scope" value="Eukaryota"/>
</dbReference>
<dbReference type="HOGENOM" id="CLU_076387_1_0_1"/>
<dbReference type="InParanoid" id="Q9UT87"/>
<dbReference type="OMA" id="TYVELRV"/>
<dbReference type="PhylomeDB" id="Q9UT87"/>
<dbReference type="PRO" id="PR:Q9UT87"/>
<dbReference type="Proteomes" id="UP000002485">
    <property type="component" value="Chromosome I"/>
</dbReference>
<dbReference type="GO" id="GO:0005762">
    <property type="term" value="C:mitochondrial large ribosomal subunit"/>
    <property type="evidence" value="ECO:0000318"/>
    <property type="project" value="GO_Central"/>
</dbReference>
<dbReference type="GO" id="GO:0005739">
    <property type="term" value="C:mitochondrion"/>
    <property type="evidence" value="ECO:0007005"/>
    <property type="project" value="PomBase"/>
</dbReference>
<dbReference type="GO" id="GO:0003735">
    <property type="term" value="F:structural constituent of ribosome"/>
    <property type="evidence" value="ECO:0000318"/>
    <property type="project" value="GO_Central"/>
</dbReference>
<dbReference type="GO" id="GO:0032543">
    <property type="term" value="P:mitochondrial translation"/>
    <property type="evidence" value="ECO:0000250"/>
    <property type="project" value="PomBase"/>
</dbReference>
<dbReference type="Gene3D" id="2.30.30.790">
    <property type="match status" value="1"/>
</dbReference>
<dbReference type="InterPro" id="IPR001857">
    <property type="entry name" value="Ribosomal_bL19"/>
</dbReference>
<dbReference type="InterPro" id="IPR038657">
    <property type="entry name" value="Ribosomal_bL19_sf"/>
</dbReference>
<dbReference type="InterPro" id="IPR008991">
    <property type="entry name" value="Translation_prot_SH3-like_sf"/>
</dbReference>
<dbReference type="PANTHER" id="PTHR15680:SF9">
    <property type="entry name" value="LARGE RIBOSOMAL SUBUNIT PROTEIN BL19M"/>
    <property type="match status" value="1"/>
</dbReference>
<dbReference type="PANTHER" id="PTHR15680">
    <property type="entry name" value="RIBOSOMAL PROTEIN L19"/>
    <property type="match status" value="1"/>
</dbReference>
<dbReference type="Pfam" id="PF01245">
    <property type="entry name" value="Ribosomal_L19"/>
    <property type="match status" value="1"/>
</dbReference>
<dbReference type="PRINTS" id="PR00061">
    <property type="entry name" value="RIBOSOMALL19"/>
</dbReference>
<dbReference type="SUPFAM" id="SSF50104">
    <property type="entry name" value="Translation proteins SH3-like domain"/>
    <property type="match status" value="1"/>
</dbReference>